<keyword id="KW-0028">Amino-acid biosynthesis</keyword>
<keyword id="KW-0057">Aromatic amino acid biosynthesis</keyword>
<keyword id="KW-0456">Lyase</keyword>
<keyword id="KW-1185">Reference proteome</keyword>
<keyword id="KW-0704">Schiff base</keyword>
<sequence>MKTVTVKDLVIGTGAPKIIVSLMAKDIARVKSEALAYREADFDILEWRVDHFADLSNVESVMAAAKILRETMPEKPLLFTFRSAKEGGEQAISTEAYIALNRAAIDSGLVDMIDLELFTGDDQVKETVAYAHAHDVKVVMSNHDFHKTPEAEEIIARLRKMQSFDADIPKIALMPQSTSDVLALLAATLEMQEQYADRPIITMSMAKTGVISRLAGEVFGSAATFGAVKKASAPGQISVNDLRTVLTILHQA</sequence>
<comment type="function">
    <text evidence="1">Involved in the third step of the chorismate pathway, which leads to the biosynthesis of aromatic amino acids. Catalyzes the cis-dehydration of 3-dehydroquinate (DHQ) and introduces the first double bond of the aromatic ring to yield 3-dehydroshikimate.</text>
</comment>
<comment type="catalytic activity">
    <reaction evidence="1">
        <text>3-dehydroquinate = 3-dehydroshikimate + H2O</text>
        <dbReference type="Rhea" id="RHEA:21096"/>
        <dbReference type="ChEBI" id="CHEBI:15377"/>
        <dbReference type="ChEBI" id="CHEBI:16630"/>
        <dbReference type="ChEBI" id="CHEBI:32364"/>
        <dbReference type="EC" id="4.2.1.10"/>
    </reaction>
</comment>
<comment type="pathway">
    <text evidence="1">Metabolic intermediate biosynthesis; chorismate biosynthesis; chorismate from D-erythrose 4-phosphate and phosphoenolpyruvate: step 3/7.</text>
</comment>
<comment type="subunit">
    <text evidence="1">Homodimer.</text>
</comment>
<comment type="similarity">
    <text evidence="1">Belongs to the type-I 3-dehydroquinase family.</text>
</comment>
<reference key="1">
    <citation type="journal article" date="2001" name="Nature">
        <title>Genome sequence of enterohaemorrhagic Escherichia coli O157:H7.</title>
        <authorList>
            <person name="Perna N.T."/>
            <person name="Plunkett G. III"/>
            <person name="Burland V."/>
            <person name="Mau B."/>
            <person name="Glasner J.D."/>
            <person name="Rose D.J."/>
            <person name="Mayhew G.F."/>
            <person name="Evans P.S."/>
            <person name="Gregor J."/>
            <person name="Kirkpatrick H.A."/>
            <person name="Posfai G."/>
            <person name="Hackett J."/>
            <person name="Klink S."/>
            <person name="Boutin A."/>
            <person name="Shao Y."/>
            <person name="Miller L."/>
            <person name="Grotbeck E.J."/>
            <person name="Davis N.W."/>
            <person name="Lim A."/>
            <person name="Dimalanta E.T."/>
            <person name="Potamousis K."/>
            <person name="Apodaca J."/>
            <person name="Anantharaman T.S."/>
            <person name="Lin J."/>
            <person name="Yen G."/>
            <person name="Schwartz D.C."/>
            <person name="Welch R.A."/>
            <person name="Blattner F.R."/>
        </authorList>
    </citation>
    <scope>NUCLEOTIDE SEQUENCE [LARGE SCALE GENOMIC DNA]</scope>
    <source>
        <strain>O157:H7 / EDL933 / ATCC 700927 / EHEC</strain>
    </source>
</reference>
<reference key="2">
    <citation type="journal article" date="2001" name="DNA Res.">
        <title>Complete genome sequence of enterohemorrhagic Escherichia coli O157:H7 and genomic comparison with a laboratory strain K-12.</title>
        <authorList>
            <person name="Hayashi T."/>
            <person name="Makino K."/>
            <person name="Ohnishi M."/>
            <person name="Kurokawa K."/>
            <person name="Ishii K."/>
            <person name="Yokoyama K."/>
            <person name="Han C.-G."/>
            <person name="Ohtsubo E."/>
            <person name="Nakayama K."/>
            <person name="Murata T."/>
            <person name="Tanaka M."/>
            <person name="Tobe T."/>
            <person name="Iida T."/>
            <person name="Takami H."/>
            <person name="Honda T."/>
            <person name="Sasakawa C."/>
            <person name="Ogasawara N."/>
            <person name="Yasunaga T."/>
            <person name="Kuhara S."/>
            <person name="Shiba T."/>
            <person name="Hattori M."/>
            <person name="Shinagawa H."/>
        </authorList>
    </citation>
    <scope>NUCLEOTIDE SEQUENCE [LARGE SCALE GENOMIC DNA]</scope>
    <source>
        <strain>O157:H7 / Sakai / RIMD 0509952 / EHEC</strain>
    </source>
</reference>
<name>AROD_ECO57</name>
<protein>
    <recommendedName>
        <fullName evidence="1">3-dehydroquinate dehydratase</fullName>
        <shortName evidence="1">3-dehydroquinase</shortName>
        <ecNumber evidence="1">4.2.1.10</ecNumber>
    </recommendedName>
    <alternativeName>
        <fullName evidence="1">Type I DHQase</fullName>
    </alternativeName>
    <alternativeName>
        <fullName evidence="1">Type I dehydroquinase</fullName>
        <shortName evidence="1">DHQ1</shortName>
    </alternativeName>
</protein>
<accession>Q8X5X7</accession>
<proteinExistence type="inferred from homology"/>
<evidence type="ECO:0000255" key="1">
    <source>
        <dbReference type="HAMAP-Rule" id="MF_00214"/>
    </source>
</evidence>
<dbReference type="EC" id="4.2.1.10" evidence="1"/>
<dbReference type="EMBL" id="AE005174">
    <property type="protein sequence ID" value="AAG56680.1"/>
    <property type="molecule type" value="Genomic_DNA"/>
</dbReference>
<dbReference type="EMBL" id="BA000007">
    <property type="protein sequence ID" value="BAB35823.1"/>
    <property type="molecule type" value="Genomic_DNA"/>
</dbReference>
<dbReference type="PIR" id="D85777">
    <property type="entry name" value="D85777"/>
</dbReference>
<dbReference type="PIR" id="H90928">
    <property type="entry name" value="H90928"/>
</dbReference>
<dbReference type="RefSeq" id="NP_310427.1">
    <property type="nucleotide sequence ID" value="NC_002695.1"/>
</dbReference>
<dbReference type="RefSeq" id="WP_000860179.1">
    <property type="nucleotide sequence ID" value="NZ_VOAI01000007.1"/>
</dbReference>
<dbReference type="SMR" id="Q8X5X7"/>
<dbReference type="STRING" id="155864.Z2721"/>
<dbReference type="GeneID" id="912629"/>
<dbReference type="KEGG" id="ece:Z2721"/>
<dbReference type="KEGG" id="ecs:ECs_2400"/>
<dbReference type="PATRIC" id="fig|386585.9.peg.2513"/>
<dbReference type="eggNOG" id="COG0710">
    <property type="taxonomic scope" value="Bacteria"/>
</dbReference>
<dbReference type="HOGENOM" id="CLU_064444_0_0_6"/>
<dbReference type="OMA" id="ATMAMGE"/>
<dbReference type="UniPathway" id="UPA00053">
    <property type="reaction ID" value="UER00086"/>
</dbReference>
<dbReference type="Proteomes" id="UP000000558">
    <property type="component" value="Chromosome"/>
</dbReference>
<dbReference type="Proteomes" id="UP000002519">
    <property type="component" value="Chromosome"/>
</dbReference>
<dbReference type="GO" id="GO:0003855">
    <property type="term" value="F:3-dehydroquinate dehydratase activity"/>
    <property type="evidence" value="ECO:0007669"/>
    <property type="project" value="UniProtKB-UniRule"/>
</dbReference>
<dbReference type="GO" id="GO:0046279">
    <property type="term" value="P:3,4-dihydroxybenzoate biosynthetic process"/>
    <property type="evidence" value="ECO:0007669"/>
    <property type="project" value="UniProtKB-ARBA"/>
</dbReference>
<dbReference type="GO" id="GO:0008652">
    <property type="term" value="P:amino acid biosynthetic process"/>
    <property type="evidence" value="ECO:0007669"/>
    <property type="project" value="UniProtKB-KW"/>
</dbReference>
<dbReference type="GO" id="GO:0009073">
    <property type="term" value="P:aromatic amino acid family biosynthetic process"/>
    <property type="evidence" value="ECO:0007669"/>
    <property type="project" value="UniProtKB-KW"/>
</dbReference>
<dbReference type="GO" id="GO:0009423">
    <property type="term" value="P:chorismate biosynthetic process"/>
    <property type="evidence" value="ECO:0007669"/>
    <property type="project" value="UniProtKB-UniRule"/>
</dbReference>
<dbReference type="CDD" id="cd00502">
    <property type="entry name" value="DHQase_I"/>
    <property type="match status" value="1"/>
</dbReference>
<dbReference type="FunFam" id="3.20.20.70:FF:000047">
    <property type="entry name" value="3-dehydroquinate dehydratase"/>
    <property type="match status" value="1"/>
</dbReference>
<dbReference type="Gene3D" id="3.20.20.70">
    <property type="entry name" value="Aldolase class I"/>
    <property type="match status" value="1"/>
</dbReference>
<dbReference type="HAMAP" id="MF_00214">
    <property type="entry name" value="AroD"/>
    <property type="match status" value="1"/>
</dbReference>
<dbReference type="InterPro" id="IPR018508">
    <property type="entry name" value="3-dehydroquinate_DH_AS"/>
</dbReference>
<dbReference type="InterPro" id="IPR013785">
    <property type="entry name" value="Aldolase_TIM"/>
</dbReference>
<dbReference type="InterPro" id="IPR001381">
    <property type="entry name" value="DHquinase_I"/>
</dbReference>
<dbReference type="InterPro" id="IPR050146">
    <property type="entry name" value="Type-I_3-dehydroquinase"/>
</dbReference>
<dbReference type="NCBIfam" id="TIGR01093">
    <property type="entry name" value="aroD"/>
    <property type="match status" value="1"/>
</dbReference>
<dbReference type="PANTHER" id="PTHR43699">
    <property type="entry name" value="3-DEHYDROQUINATE DEHYDRATASE"/>
    <property type="match status" value="1"/>
</dbReference>
<dbReference type="PANTHER" id="PTHR43699:SF1">
    <property type="entry name" value="3-DEHYDROQUINATE DEHYDRATASE"/>
    <property type="match status" value="1"/>
</dbReference>
<dbReference type="Pfam" id="PF01487">
    <property type="entry name" value="DHquinase_I"/>
    <property type="match status" value="1"/>
</dbReference>
<dbReference type="SUPFAM" id="SSF51569">
    <property type="entry name" value="Aldolase"/>
    <property type="match status" value="1"/>
</dbReference>
<dbReference type="PROSITE" id="PS01028">
    <property type="entry name" value="DEHYDROQUINASE_I"/>
    <property type="match status" value="1"/>
</dbReference>
<feature type="chain" id="PRO_0000138796" description="3-dehydroquinate dehydratase">
    <location>
        <begin position="1"/>
        <end position="252"/>
    </location>
</feature>
<feature type="active site" description="Proton donor/acceptor" evidence="1">
    <location>
        <position position="143"/>
    </location>
</feature>
<feature type="active site" description="Schiff-base intermediate with substrate" evidence="1">
    <location>
        <position position="170"/>
    </location>
</feature>
<feature type="binding site" evidence="1">
    <location>
        <position position="21"/>
    </location>
    <ligand>
        <name>3-dehydroquinate</name>
        <dbReference type="ChEBI" id="CHEBI:32364"/>
    </ligand>
</feature>
<feature type="binding site" evidence="1">
    <location>
        <begin position="46"/>
        <end position="48"/>
    </location>
    <ligand>
        <name>3-dehydroquinate</name>
        <dbReference type="ChEBI" id="CHEBI:32364"/>
    </ligand>
</feature>
<feature type="binding site" evidence="1">
    <location>
        <position position="82"/>
    </location>
    <ligand>
        <name>3-dehydroquinate</name>
        <dbReference type="ChEBI" id="CHEBI:32364"/>
    </ligand>
</feature>
<feature type="binding site" evidence="1">
    <location>
        <position position="213"/>
    </location>
    <ligand>
        <name>3-dehydroquinate</name>
        <dbReference type="ChEBI" id="CHEBI:32364"/>
    </ligand>
</feature>
<feature type="binding site" evidence="1">
    <location>
        <position position="232"/>
    </location>
    <ligand>
        <name>3-dehydroquinate</name>
        <dbReference type="ChEBI" id="CHEBI:32364"/>
    </ligand>
</feature>
<feature type="binding site" evidence="1">
    <location>
        <position position="236"/>
    </location>
    <ligand>
        <name>3-dehydroquinate</name>
        <dbReference type="ChEBI" id="CHEBI:32364"/>
    </ligand>
</feature>
<organism>
    <name type="scientific">Escherichia coli O157:H7</name>
    <dbReference type="NCBI Taxonomy" id="83334"/>
    <lineage>
        <taxon>Bacteria</taxon>
        <taxon>Pseudomonadati</taxon>
        <taxon>Pseudomonadota</taxon>
        <taxon>Gammaproteobacteria</taxon>
        <taxon>Enterobacterales</taxon>
        <taxon>Enterobacteriaceae</taxon>
        <taxon>Escherichia</taxon>
    </lineage>
</organism>
<gene>
    <name evidence="1" type="primary">aroD</name>
    <name type="ordered locus">Z2721</name>
    <name type="ordered locus">ECs2400</name>
</gene>